<protein>
    <recommendedName>
        <fullName evidence="1">Small ribosomal subunit protein uS2</fullName>
    </recommendedName>
    <alternativeName>
        <fullName evidence="2">30S ribosomal protein S2</fullName>
    </alternativeName>
</protein>
<sequence>MSVISMKQLLEAGVHFGHQTRRWNPKMAPYIFTERNGIYIIDLQKTVRKAEEAYNFIKEVSTEGKDILFVGTKKQAQDAIKDEAIRSSMHFVNNRWLGGMLTNFSTIKKRIRRLSEIETMQEDGTFEVLPKKEVIKLKGELEKLEKNLGGIKNLDCDNIGAMFVVDPRKEKNAISEAKILGIPVVAIVDTNCDPEEVDYVIPGNDDAIRAVKLITAKMADAIMEGRQGEELAE</sequence>
<organism>
    <name type="scientific">Clostridium botulinum (strain Eklund 17B / Type B)</name>
    <dbReference type="NCBI Taxonomy" id="935198"/>
    <lineage>
        <taxon>Bacteria</taxon>
        <taxon>Bacillati</taxon>
        <taxon>Bacillota</taxon>
        <taxon>Clostridia</taxon>
        <taxon>Eubacteriales</taxon>
        <taxon>Clostridiaceae</taxon>
        <taxon>Clostridium</taxon>
    </lineage>
</organism>
<reference key="1">
    <citation type="submission" date="2008-04" db="EMBL/GenBank/DDBJ databases">
        <title>Complete sequence of Clostridium botulinum strain Eklund.</title>
        <authorList>
            <person name="Brinkac L.M."/>
            <person name="Brown J.L."/>
            <person name="Bruce D."/>
            <person name="Detter C."/>
            <person name="Munk C."/>
            <person name="Smith L.A."/>
            <person name="Smith T.J."/>
            <person name="Sutton G."/>
            <person name="Brettin T.S."/>
        </authorList>
    </citation>
    <scope>NUCLEOTIDE SEQUENCE [LARGE SCALE GENOMIC DNA]</scope>
    <source>
        <strain>Eklund 17B / Type B</strain>
    </source>
</reference>
<comment type="similarity">
    <text evidence="1">Belongs to the universal ribosomal protein uS2 family.</text>
</comment>
<keyword id="KW-0687">Ribonucleoprotein</keyword>
<keyword id="KW-0689">Ribosomal protein</keyword>
<feature type="chain" id="PRO_1000115006" description="Small ribosomal subunit protein uS2">
    <location>
        <begin position="1"/>
        <end position="233"/>
    </location>
</feature>
<dbReference type="EMBL" id="CP001056">
    <property type="protein sequence ID" value="ACD22234.1"/>
    <property type="molecule type" value="Genomic_DNA"/>
</dbReference>
<dbReference type="SMR" id="B2TJ40"/>
<dbReference type="KEGG" id="cbk:CLL_A1258"/>
<dbReference type="PATRIC" id="fig|935198.13.peg.1204"/>
<dbReference type="HOGENOM" id="CLU_040318_1_2_9"/>
<dbReference type="Proteomes" id="UP000001195">
    <property type="component" value="Chromosome"/>
</dbReference>
<dbReference type="GO" id="GO:0022627">
    <property type="term" value="C:cytosolic small ribosomal subunit"/>
    <property type="evidence" value="ECO:0007669"/>
    <property type="project" value="TreeGrafter"/>
</dbReference>
<dbReference type="GO" id="GO:0003735">
    <property type="term" value="F:structural constituent of ribosome"/>
    <property type="evidence" value="ECO:0007669"/>
    <property type="project" value="InterPro"/>
</dbReference>
<dbReference type="GO" id="GO:0006412">
    <property type="term" value="P:translation"/>
    <property type="evidence" value="ECO:0007669"/>
    <property type="project" value="UniProtKB-UniRule"/>
</dbReference>
<dbReference type="CDD" id="cd01425">
    <property type="entry name" value="RPS2"/>
    <property type="match status" value="1"/>
</dbReference>
<dbReference type="FunFam" id="1.10.287.610:FF:000001">
    <property type="entry name" value="30S ribosomal protein S2"/>
    <property type="match status" value="1"/>
</dbReference>
<dbReference type="Gene3D" id="3.40.50.10490">
    <property type="entry name" value="Glucose-6-phosphate isomerase like protein, domain 1"/>
    <property type="match status" value="1"/>
</dbReference>
<dbReference type="Gene3D" id="1.10.287.610">
    <property type="entry name" value="Helix hairpin bin"/>
    <property type="match status" value="1"/>
</dbReference>
<dbReference type="HAMAP" id="MF_00291_B">
    <property type="entry name" value="Ribosomal_uS2_B"/>
    <property type="match status" value="1"/>
</dbReference>
<dbReference type="InterPro" id="IPR001865">
    <property type="entry name" value="Ribosomal_uS2"/>
</dbReference>
<dbReference type="InterPro" id="IPR005706">
    <property type="entry name" value="Ribosomal_uS2_bac/mit/plastid"/>
</dbReference>
<dbReference type="InterPro" id="IPR018130">
    <property type="entry name" value="Ribosomal_uS2_CS"/>
</dbReference>
<dbReference type="InterPro" id="IPR023591">
    <property type="entry name" value="Ribosomal_uS2_flav_dom_sf"/>
</dbReference>
<dbReference type="NCBIfam" id="TIGR01011">
    <property type="entry name" value="rpsB_bact"/>
    <property type="match status" value="1"/>
</dbReference>
<dbReference type="PANTHER" id="PTHR12534">
    <property type="entry name" value="30S RIBOSOMAL PROTEIN S2 PROKARYOTIC AND ORGANELLAR"/>
    <property type="match status" value="1"/>
</dbReference>
<dbReference type="PANTHER" id="PTHR12534:SF0">
    <property type="entry name" value="SMALL RIBOSOMAL SUBUNIT PROTEIN US2M"/>
    <property type="match status" value="1"/>
</dbReference>
<dbReference type="Pfam" id="PF00318">
    <property type="entry name" value="Ribosomal_S2"/>
    <property type="match status" value="1"/>
</dbReference>
<dbReference type="PRINTS" id="PR00395">
    <property type="entry name" value="RIBOSOMALS2"/>
</dbReference>
<dbReference type="SUPFAM" id="SSF52313">
    <property type="entry name" value="Ribosomal protein S2"/>
    <property type="match status" value="1"/>
</dbReference>
<dbReference type="PROSITE" id="PS00962">
    <property type="entry name" value="RIBOSOMAL_S2_1"/>
    <property type="match status" value="1"/>
</dbReference>
<evidence type="ECO:0000255" key="1">
    <source>
        <dbReference type="HAMAP-Rule" id="MF_00291"/>
    </source>
</evidence>
<evidence type="ECO:0000305" key="2"/>
<accession>B2TJ40</accession>
<proteinExistence type="inferred from homology"/>
<gene>
    <name evidence="1" type="primary">rpsB</name>
    <name type="ordered locus">CLL_A1258</name>
</gene>
<name>RS2_CLOBB</name>